<gene>
    <name evidence="1" type="primary">trpA</name>
    <name type="ordered locus">BA_1254</name>
    <name type="ordered locus">GBAA_1254</name>
    <name type="ordered locus">BAS1162</name>
</gene>
<dbReference type="EC" id="4.2.1.20" evidence="1"/>
<dbReference type="EMBL" id="AE016879">
    <property type="protein sequence ID" value="AAP25212.1"/>
    <property type="molecule type" value="Genomic_DNA"/>
</dbReference>
<dbReference type="EMBL" id="AE017334">
    <property type="protein sequence ID" value="AAT30344.1"/>
    <property type="molecule type" value="Genomic_DNA"/>
</dbReference>
<dbReference type="EMBL" id="AE017225">
    <property type="protein sequence ID" value="AAT53484.1"/>
    <property type="molecule type" value="Genomic_DNA"/>
</dbReference>
<dbReference type="RefSeq" id="NP_843726.1">
    <property type="nucleotide sequence ID" value="NC_003997.3"/>
</dbReference>
<dbReference type="RefSeq" id="WP_000537938.1">
    <property type="nucleotide sequence ID" value="NZ_WXXJ01000020.1"/>
</dbReference>
<dbReference type="RefSeq" id="YP_027433.1">
    <property type="nucleotide sequence ID" value="NC_005945.1"/>
</dbReference>
<dbReference type="SMR" id="Q81TL7"/>
<dbReference type="IntAct" id="Q81TL7">
    <property type="interactions" value="1"/>
</dbReference>
<dbReference type="STRING" id="261594.GBAA_1254"/>
<dbReference type="DNASU" id="1085329"/>
<dbReference type="GeneID" id="45021254"/>
<dbReference type="KEGG" id="ban:BA_1254"/>
<dbReference type="KEGG" id="bar:GBAA_1254"/>
<dbReference type="KEGG" id="bat:BAS1162"/>
<dbReference type="PATRIC" id="fig|198094.11.peg.1230"/>
<dbReference type="eggNOG" id="COG0159">
    <property type="taxonomic scope" value="Bacteria"/>
</dbReference>
<dbReference type="HOGENOM" id="CLU_016734_0_0_9"/>
<dbReference type="OMA" id="LVMTYWN"/>
<dbReference type="OrthoDB" id="9804578at2"/>
<dbReference type="UniPathway" id="UPA00035">
    <property type="reaction ID" value="UER00044"/>
</dbReference>
<dbReference type="Proteomes" id="UP000000427">
    <property type="component" value="Chromosome"/>
</dbReference>
<dbReference type="Proteomes" id="UP000000594">
    <property type="component" value="Chromosome"/>
</dbReference>
<dbReference type="GO" id="GO:0005829">
    <property type="term" value="C:cytosol"/>
    <property type="evidence" value="ECO:0007669"/>
    <property type="project" value="TreeGrafter"/>
</dbReference>
<dbReference type="GO" id="GO:0004834">
    <property type="term" value="F:tryptophan synthase activity"/>
    <property type="evidence" value="ECO:0007669"/>
    <property type="project" value="UniProtKB-UniRule"/>
</dbReference>
<dbReference type="CDD" id="cd04724">
    <property type="entry name" value="Tryptophan_synthase_alpha"/>
    <property type="match status" value="1"/>
</dbReference>
<dbReference type="FunFam" id="3.20.20.70:FF:000037">
    <property type="entry name" value="Tryptophan synthase alpha chain"/>
    <property type="match status" value="1"/>
</dbReference>
<dbReference type="Gene3D" id="3.20.20.70">
    <property type="entry name" value="Aldolase class I"/>
    <property type="match status" value="1"/>
</dbReference>
<dbReference type="HAMAP" id="MF_00131">
    <property type="entry name" value="Trp_synth_alpha"/>
    <property type="match status" value="1"/>
</dbReference>
<dbReference type="InterPro" id="IPR013785">
    <property type="entry name" value="Aldolase_TIM"/>
</dbReference>
<dbReference type="InterPro" id="IPR011060">
    <property type="entry name" value="RibuloseP-bd_barrel"/>
</dbReference>
<dbReference type="InterPro" id="IPR018204">
    <property type="entry name" value="Trp_synthase_alpha_AS"/>
</dbReference>
<dbReference type="InterPro" id="IPR002028">
    <property type="entry name" value="Trp_synthase_suA"/>
</dbReference>
<dbReference type="NCBIfam" id="TIGR00262">
    <property type="entry name" value="trpA"/>
    <property type="match status" value="1"/>
</dbReference>
<dbReference type="PANTHER" id="PTHR43406:SF1">
    <property type="entry name" value="TRYPTOPHAN SYNTHASE ALPHA CHAIN, CHLOROPLASTIC"/>
    <property type="match status" value="1"/>
</dbReference>
<dbReference type="PANTHER" id="PTHR43406">
    <property type="entry name" value="TRYPTOPHAN SYNTHASE, ALPHA CHAIN"/>
    <property type="match status" value="1"/>
</dbReference>
<dbReference type="Pfam" id="PF00290">
    <property type="entry name" value="Trp_syntA"/>
    <property type="match status" value="1"/>
</dbReference>
<dbReference type="SUPFAM" id="SSF51366">
    <property type="entry name" value="Ribulose-phoshate binding barrel"/>
    <property type="match status" value="1"/>
</dbReference>
<dbReference type="PROSITE" id="PS00167">
    <property type="entry name" value="TRP_SYNTHASE_ALPHA"/>
    <property type="match status" value="1"/>
</dbReference>
<feature type="chain" id="PRO_0000098732" description="Tryptophan synthase alpha chain">
    <location>
        <begin position="1"/>
        <end position="258"/>
    </location>
</feature>
<feature type="active site" description="Proton acceptor" evidence="1">
    <location>
        <position position="47"/>
    </location>
</feature>
<feature type="active site" description="Proton acceptor" evidence="1">
    <location>
        <position position="58"/>
    </location>
</feature>
<evidence type="ECO:0000255" key="1">
    <source>
        <dbReference type="HAMAP-Rule" id="MF_00131"/>
    </source>
</evidence>
<protein>
    <recommendedName>
        <fullName evidence="1">Tryptophan synthase alpha chain</fullName>
        <ecNumber evidence="1">4.2.1.20</ecNumber>
    </recommendedName>
</protein>
<name>TRPA_BACAN</name>
<sequence length="258" mass="28355">MGVERIKAAFENGKKAFIPYVMGGDGGLEILKERIRFLDEAGASIVEIGIPFSDPVADGPTIQRAGKRALDSGVTVKGIFQALIEVRKEVQIPFVLMTYLNPVLAFGKERFIENCMEAGVDGIIVPDLPYEEQDIIAPLLREANIALIPLVTVTSPIERIKKITSESEGFVYAVTVAGVTGVRQNFKDEIHSYLEKVKSHTHLPVVAGFGISTKEHVEEMVTICDGVVVGSKVIELLENEKREEICEFIQATKQKEEA</sequence>
<reference key="1">
    <citation type="journal article" date="2003" name="Nature">
        <title>The genome sequence of Bacillus anthracis Ames and comparison to closely related bacteria.</title>
        <authorList>
            <person name="Read T.D."/>
            <person name="Peterson S.N."/>
            <person name="Tourasse N.J."/>
            <person name="Baillie L.W."/>
            <person name="Paulsen I.T."/>
            <person name="Nelson K.E."/>
            <person name="Tettelin H."/>
            <person name="Fouts D.E."/>
            <person name="Eisen J.A."/>
            <person name="Gill S.R."/>
            <person name="Holtzapple E.K."/>
            <person name="Okstad O.A."/>
            <person name="Helgason E."/>
            <person name="Rilstone J."/>
            <person name="Wu M."/>
            <person name="Kolonay J.F."/>
            <person name="Beanan M.J."/>
            <person name="Dodson R.J."/>
            <person name="Brinkac L.M."/>
            <person name="Gwinn M.L."/>
            <person name="DeBoy R.T."/>
            <person name="Madpu R."/>
            <person name="Daugherty S.C."/>
            <person name="Durkin A.S."/>
            <person name="Haft D.H."/>
            <person name="Nelson W.C."/>
            <person name="Peterson J.D."/>
            <person name="Pop M."/>
            <person name="Khouri H.M."/>
            <person name="Radune D."/>
            <person name="Benton J.L."/>
            <person name="Mahamoud Y."/>
            <person name="Jiang L."/>
            <person name="Hance I.R."/>
            <person name="Weidman J.F."/>
            <person name="Berry K.J."/>
            <person name="Plaut R.D."/>
            <person name="Wolf A.M."/>
            <person name="Watkins K.L."/>
            <person name="Nierman W.C."/>
            <person name="Hazen A."/>
            <person name="Cline R.T."/>
            <person name="Redmond C."/>
            <person name="Thwaite J.E."/>
            <person name="White O."/>
            <person name="Salzberg S.L."/>
            <person name="Thomason B."/>
            <person name="Friedlander A.M."/>
            <person name="Koehler T.M."/>
            <person name="Hanna P.C."/>
            <person name="Kolstoe A.-B."/>
            <person name="Fraser C.M."/>
        </authorList>
    </citation>
    <scope>NUCLEOTIDE SEQUENCE [LARGE SCALE GENOMIC DNA]</scope>
    <source>
        <strain>Ames / isolate Porton</strain>
    </source>
</reference>
<reference key="2">
    <citation type="journal article" date="2009" name="J. Bacteriol.">
        <title>The complete genome sequence of Bacillus anthracis Ames 'Ancestor'.</title>
        <authorList>
            <person name="Ravel J."/>
            <person name="Jiang L."/>
            <person name="Stanley S.T."/>
            <person name="Wilson M.R."/>
            <person name="Decker R.S."/>
            <person name="Read T.D."/>
            <person name="Worsham P."/>
            <person name="Keim P.S."/>
            <person name="Salzberg S.L."/>
            <person name="Fraser-Liggett C.M."/>
            <person name="Rasko D.A."/>
        </authorList>
    </citation>
    <scope>NUCLEOTIDE SEQUENCE [LARGE SCALE GENOMIC DNA]</scope>
    <source>
        <strain>Ames ancestor</strain>
    </source>
</reference>
<reference key="3">
    <citation type="submission" date="2004-01" db="EMBL/GenBank/DDBJ databases">
        <title>Complete genome sequence of Bacillus anthracis Sterne.</title>
        <authorList>
            <person name="Brettin T.S."/>
            <person name="Bruce D."/>
            <person name="Challacombe J.F."/>
            <person name="Gilna P."/>
            <person name="Han C."/>
            <person name="Hill K."/>
            <person name="Hitchcock P."/>
            <person name="Jackson P."/>
            <person name="Keim P."/>
            <person name="Longmire J."/>
            <person name="Lucas S."/>
            <person name="Okinaka R."/>
            <person name="Richardson P."/>
            <person name="Rubin E."/>
            <person name="Tice H."/>
        </authorList>
    </citation>
    <scope>NUCLEOTIDE SEQUENCE [LARGE SCALE GENOMIC DNA]</scope>
    <source>
        <strain>Sterne</strain>
    </source>
</reference>
<organism>
    <name type="scientific">Bacillus anthracis</name>
    <dbReference type="NCBI Taxonomy" id="1392"/>
    <lineage>
        <taxon>Bacteria</taxon>
        <taxon>Bacillati</taxon>
        <taxon>Bacillota</taxon>
        <taxon>Bacilli</taxon>
        <taxon>Bacillales</taxon>
        <taxon>Bacillaceae</taxon>
        <taxon>Bacillus</taxon>
        <taxon>Bacillus cereus group</taxon>
    </lineage>
</organism>
<keyword id="KW-0028">Amino-acid biosynthesis</keyword>
<keyword id="KW-0057">Aromatic amino acid biosynthesis</keyword>
<keyword id="KW-0456">Lyase</keyword>
<keyword id="KW-1185">Reference proteome</keyword>
<keyword id="KW-0822">Tryptophan biosynthesis</keyword>
<accession>Q81TL7</accession>
<accession>Q6I1U7</accession>
<accession>Q6KVN9</accession>
<proteinExistence type="inferred from homology"/>
<comment type="function">
    <text evidence="1">The alpha subunit is responsible for the aldol cleavage of indoleglycerol phosphate to indole and glyceraldehyde 3-phosphate.</text>
</comment>
<comment type="catalytic activity">
    <reaction evidence="1">
        <text>(1S,2R)-1-C-(indol-3-yl)glycerol 3-phosphate + L-serine = D-glyceraldehyde 3-phosphate + L-tryptophan + H2O</text>
        <dbReference type="Rhea" id="RHEA:10532"/>
        <dbReference type="ChEBI" id="CHEBI:15377"/>
        <dbReference type="ChEBI" id="CHEBI:33384"/>
        <dbReference type="ChEBI" id="CHEBI:57912"/>
        <dbReference type="ChEBI" id="CHEBI:58866"/>
        <dbReference type="ChEBI" id="CHEBI:59776"/>
        <dbReference type="EC" id="4.2.1.20"/>
    </reaction>
</comment>
<comment type="pathway">
    <text evidence="1">Amino-acid biosynthesis; L-tryptophan biosynthesis; L-tryptophan from chorismate: step 5/5.</text>
</comment>
<comment type="subunit">
    <text evidence="1">Tetramer of two alpha and two beta chains.</text>
</comment>
<comment type="similarity">
    <text evidence="1">Belongs to the TrpA family.</text>
</comment>